<sequence>MVRTKADSAGSSASSGSYRKAVAARAPRKTFGSSSSGSNHVTSPTGKKSESKYAGGNPVCVRPTPTWQKGIGEFFGSPSTSQPEKENRIPSDDEEAGGSGAGKAPRKSRPLPPDPSEEAADSDDE</sequence>
<proteinExistence type="evidence at transcript level"/>
<keyword id="KW-0963">Cytoplasm</keyword>
<keyword id="KW-0227">DNA damage</keyword>
<keyword id="KW-0234">DNA repair</keyword>
<keyword id="KW-0539">Nucleus</keyword>
<keyword id="KW-1185">Reference proteome</keyword>
<protein>
    <recommendedName>
        <fullName evidence="4">PCNA-associated factor</fullName>
    </recommendedName>
    <alternativeName>
        <fullName>PCNA-associated factor of 15 kDa</fullName>
        <shortName>PAF15</shortName>
        <shortName>p15PAF</shortName>
    </alternativeName>
    <alternativeName>
        <fullName evidence="2">PCNA-clamp-associated factor</fullName>
    </alternativeName>
</protein>
<feature type="chain" id="PRO_0000420483" description="PCNA-associated factor">
    <location>
        <begin position="1"/>
        <end position="125"/>
    </location>
</feature>
<feature type="region of interest" description="Disordered" evidence="3">
    <location>
        <begin position="1"/>
        <end position="125"/>
    </location>
</feature>
<feature type="short sequence motif" description="D-box">
    <location>
        <begin position="28"/>
        <end position="39"/>
    </location>
</feature>
<feature type="short sequence motif" description="PIP-box">
    <location>
        <begin position="68"/>
        <end position="79"/>
    </location>
</feature>
<feature type="short sequence motif" description="KEN box">
    <location>
        <begin position="85"/>
        <end position="87"/>
    </location>
</feature>
<feature type="short sequence motif" description="Initiation motif">
    <location>
        <begin position="95"/>
        <end position="107"/>
    </location>
</feature>
<feature type="compositionally biased region" description="Low complexity" evidence="3">
    <location>
        <begin position="8"/>
        <end position="17"/>
    </location>
</feature>
<feature type="compositionally biased region" description="Acidic residues" evidence="3">
    <location>
        <begin position="115"/>
        <end position="125"/>
    </location>
</feature>
<evidence type="ECO:0000250" key="1"/>
<evidence type="ECO:0000250" key="2">
    <source>
        <dbReference type="UniProtKB" id="Q15004"/>
    </source>
</evidence>
<evidence type="ECO:0000256" key="3">
    <source>
        <dbReference type="SAM" id="MobiDB-lite"/>
    </source>
</evidence>
<evidence type="ECO:0000305" key="4"/>
<gene>
    <name evidence="2" type="primary">pclaf</name>
    <name type="synonym">paf</name>
</gene>
<dbReference type="EMBL" id="AAMC01085630">
    <property type="status" value="NOT_ANNOTATED_CDS"/>
    <property type="molecule type" value="Genomic_DNA"/>
</dbReference>
<dbReference type="EMBL" id="BC077667">
    <property type="protein sequence ID" value="AAH77667.1"/>
    <property type="molecule type" value="mRNA"/>
</dbReference>
<dbReference type="RefSeq" id="NP_001005130.1">
    <property type="nucleotide sequence ID" value="NM_001005130.2"/>
</dbReference>
<dbReference type="SMR" id="Q6AZL2"/>
<dbReference type="FunCoup" id="Q6AZL2">
    <property type="interactions" value="1789"/>
</dbReference>
<dbReference type="STRING" id="8364.ENSXETP00000004759"/>
<dbReference type="PaxDb" id="8364-ENSXETP00000057278"/>
<dbReference type="DNASU" id="448713"/>
<dbReference type="GeneID" id="448713"/>
<dbReference type="KEGG" id="xtr:448713"/>
<dbReference type="AGR" id="Xenbase:XB-GENE-1006964"/>
<dbReference type="CTD" id="9768"/>
<dbReference type="Xenbase" id="XB-GENE-1006964">
    <property type="gene designation" value="pclaf"/>
</dbReference>
<dbReference type="eggNOG" id="ENOG502S3UM">
    <property type="taxonomic scope" value="Eukaryota"/>
</dbReference>
<dbReference type="HOGENOM" id="CLU_142343_0_0_1"/>
<dbReference type="InParanoid" id="Q6AZL2"/>
<dbReference type="OMA" id="NAYCPRP"/>
<dbReference type="OrthoDB" id="7479084at2759"/>
<dbReference type="PhylomeDB" id="Q6AZL2"/>
<dbReference type="TreeFam" id="TF333199"/>
<dbReference type="Reactome" id="R-XTR-5656169">
    <property type="pathway name" value="Termination of translesion DNA synthesis"/>
</dbReference>
<dbReference type="Proteomes" id="UP000008143">
    <property type="component" value="Chromosome 3"/>
</dbReference>
<dbReference type="Bgee" id="ENSXETG00000027460">
    <property type="expression patterns" value="Expressed in 2-cell stage embryo and 13 other cell types or tissues"/>
</dbReference>
<dbReference type="GO" id="GO:0005634">
    <property type="term" value="C:nucleus"/>
    <property type="evidence" value="ECO:0000250"/>
    <property type="project" value="UniProtKB"/>
</dbReference>
<dbReference type="GO" id="GO:0048471">
    <property type="term" value="C:perinuclear region of cytoplasm"/>
    <property type="evidence" value="ECO:0000250"/>
    <property type="project" value="UniProtKB"/>
</dbReference>
<dbReference type="GO" id="GO:0003682">
    <property type="term" value="F:chromatin binding"/>
    <property type="evidence" value="ECO:0000250"/>
    <property type="project" value="UniProtKB"/>
</dbReference>
<dbReference type="GO" id="GO:0007098">
    <property type="term" value="P:centrosome cycle"/>
    <property type="evidence" value="ECO:0000250"/>
    <property type="project" value="UniProtKB"/>
</dbReference>
<dbReference type="GO" id="GO:0006974">
    <property type="term" value="P:DNA damage response"/>
    <property type="evidence" value="ECO:0000250"/>
    <property type="project" value="UniProtKB"/>
</dbReference>
<dbReference type="GO" id="GO:0006260">
    <property type="term" value="P:DNA replication"/>
    <property type="evidence" value="ECO:0000250"/>
    <property type="project" value="UniProtKB"/>
</dbReference>
<dbReference type="GO" id="GO:0051726">
    <property type="term" value="P:regulation of cell cycle"/>
    <property type="evidence" value="ECO:0000250"/>
    <property type="project" value="UniProtKB"/>
</dbReference>
<dbReference type="GO" id="GO:0009411">
    <property type="term" value="P:response to UV"/>
    <property type="evidence" value="ECO:0000250"/>
    <property type="project" value="UniProtKB"/>
</dbReference>
<dbReference type="GO" id="GO:0019985">
    <property type="term" value="P:translesion synthesis"/>
    <property type="evidence" value="ECO:0000250"/>
    <property type="project" value="UniProtKB"/>
</dbReference>
<dbReference type="InterPro" id="IPR040444">
    <property type="entry name" value="PCNA-AF"/>
</dbReference>
<dbReference type="InterPro" id="IPR031444">
    <property type="entry name" value="PCNA-AF_dom"/>
</dbReference>
<dbReference type="PANTHER" id="PTHR15679">
    <property type="entry name" value="PCNA-ASSOCIATED FACTOR"/>
    <property type="match status" value="1"/>
</dbReference>
<dbReference type="PANTHER" id="PTHR15679:SF8">
    <property type="entry name" value="PCNA-ASSOCIATED FACTOR"/>
    <property type="match status" value="1"/>
</dbReference>
<dbReference type="Pfam" id="PF15715">
    <property type="entry name" value="PAF"/>
    <property type="match status" value="1"/>
</dbReference>
<organism>
    <name type="scientific">Xenopus tropicalis</name>
    <name type="common">Western clawed frog</name>
    <name type="synonym">Silurana tropicalis</name>
    <dbReference type="NCBI Taxonomy" id="8364"/>
    <lineage>
        <taxon>Eukaryota</taxon>
        <taxon>Metazoa</taxon>
        <taxon>Chordata</taxon>
        <taxon>Craniata</taxon>
        <taxon>Vertebrata</taxon>
        <taxon>Euteleostomi</taxon>
        <taxon>Amphibia</taxon>
        <taxon>Batrachia</taxon>
        <taxon>Anura</taxon>
        <taxon>Pipoidea</taxon>
        <taxon>Pipidae</taxon>
        <taxon>Xenopodinae</taxon>
        <taxon>Xenopus</taxon>
        <taxon>Silurana</taxon>
    </lineage>
</organism>
<name>PAF15_XENTR</name>
<comment type="function">
    <text evidence="1">PCNA-binding protein that acts as a regulator of DNA repair during DNA replication. Following DNA damage, the interaction with pcna is disrupted, facilitating the interaction between monoubiquitinated pcna and the translesion DNA synthesis DNA polymerase eta (polh) at stalled replisomes, facilitating the bypass of replication-fork-blocking lesions. Also acts as a regulator of centrosome number (By similarity).</text>
</comment>
<comment type="subunit">
    <text evidence="1">Interacts with pcna.</text>
</comment>
<comment type="subcellular location">
    <subcellularLocation>
        <location evidence="2">Nucleus</location>
    </subcellularLocation>
    <subcellularLocation>
        <location evidence="2">Cytoplasm</location>
        <location evidence="2">Perinuclear region</location>
    </subcellularLocation>
    <text evidence="2">Following DNA damage, localizes to DNA damage sites. Colocalizes with centrosomes in perinuclear region.</text>
</comment>
<reference key="1">
    <citation type="journal article" date="2010" name="Science">
        <title>The genome of the Western clawed frog Xenopus tropicalis.</title>
        <authorList>
            <person name="Hellsten U."/>
            <person name="Harland R.M."/>
            <person name="Gilchrist M.J."/>
            <person name="Hendrix D."/>
            <person name="Jurka J."/>
            <person name="Kapitonov V."/>
            <person name="Ovcharenko I."/>
            <person name="Putnam N.H."/>
            <person name="Shu S."/>
            <person name="Taher L."/>
            <person name="Blitz I.L."/>
            <person name="Blumberg B."/>
            <person name="Dichmann D.S."/>
            <person name="Dubchak I."/>
            <person name="Amaya E."/>
            <person name="Detter J.C."/>
            <person name="Fletcher R."/>
            <person name="Gerhard D.S."/>
            <person name="Goodstein D."/>
            <person name="Graves T."/>
            <person name="Grigoriev I.V."/>
            <person name="Grimwood J."/>
            <person name="Kawashima T."/>
            <person name="Lindquist E."/>
            <person name="Lucas S.M."/>
            <person name="Mead P.E."/>
            <person name="Mitros T."/>
            <person name="Ogino H."/>
            <person name="Ohta Y."/>
            <person name="Poliakov A.V."/>
            <person name="Pollet N."/>
            <person name="Robert J."/>
            <person name="Salamov A."/>
            <person name="Sater A.K."/>
            <person name="Schmutz J."/>
            <person name="Terry A."/>
            <person name="Vize P.D."/>
            <person name="Warren W.C."/>
            <person name="Wells D."/>
            <person name="Wills A."/>
            <person name="Wilson R.K."/>
            <person name="Zimmerman L.B."/>
            <person name="Zorn A.M."/>
            <person name="Grainger R."/>
            <person name="Grammer T."/>
            <person name="Khokha M.K."/>
            <person name="Richardson P.M."/>
            <person name="Rokhsar D.S."/>
        </authorList>
    </citation>
    <scope>NUCLEOTIDE SEQUENCE [LARGE SCALE GENOMIC DNA]</scope>
</reference>
<reference key="2">
    <citation type="submission" date="2004-07" db="EMBL/GenBank/DDBJ databases">
        <authorList>
            <consortium name="NIH - Xenopus Gene Collection (XGC) project"/>
        </authorList>
    </citation>
    <scope>NUCLEOTIDE SEQUENCE [LARGE SCALE MRNA]</scope>
    <source>
        <tissue>Embryo</tissue>
    </source>
</reference>
<accession>Q6AZL2</accession>